<dbReference type="PDB" id="2ZX0">
    <property type="method" value="X-ray"/>
    <property type="resolution" value="1.90 A"/>
    <property type="chains" value="A/B=1-195"/>
</dbReference>
<dbReference type="PDB" id="2ZX1">
    <property type="method" value="X-ray"/>
    <property type="resolution" value="1.90 A"/>
    <property type="chains" value="A/B=1-195"/>
</dbReference>
<dbReference type="PDB" id="2ZX2">
    <property type="method" value="X-ray"/>
    <property type="resolution" value="1.80 A"/>
    <property type="chains" value="A/B=1-195"/>
</dbReference>
<dbReference type="PDB" id="2ZX3">
    <property type="method" value="X-ray"/>
    <property type="resolution" value="2.10 A"/>
    <property type="chains" value="A/B=1-195"/>
</dbReference>
<dbReference type="PDB" id="2ZX4">
    <property type="method" value="X-ray"/>
    <property type="resolution" value="2.70 A"/>
    <property type="chains" value="A/B=1-195"/>
</dbReference>
<dbReference type="PDBsum" id="2ZX0"/>
<dbReference type="PDBsum" id="2ZX1"/>
<dbReference type="PDBsum" id="2ZX2"/>
<dbReference type="PDBsum" id="2ZX3"/>
<dbReference type="PDBsum" id="2ZX4"/>
<dbReference type="SMR" id="P86179"/>
<dbReference type="UniLectin" id="P86179"/>
<dbReference type="EvolutionaryTrace" id="P86179"/>
<dbReference type="GO" id="GO:0060473">
    <property type="term" value="C:cortical granule"/>
    <property type="evidence" value="ECO:0000250"/>
    <property type="project" value="AgBase"/>
</dbReference>
<dbReference type="GO" id="GO:0005737">
    <property type="term" value="C:cytoplasm"/>
    <property type="evidence" value="ECO:0000250"/>
    <property type="project" value="AgBase"/>
</dbReference>
<dbReference type="GO" id="GO:0001674">
    <property type="term" value="C:female germ cell nucleus"/>
    <property type="evidence" value="ECO:0000250"/>
    <property type="project" value="AgBase"/>
</dbReference>
<dbReference type="GO" id="GO:0042564">
    <property type="term" value="C:NLS-dependent protein nuclear import complex"/>
    <property type="evidence" value="ECO:0000250"/>
    <property type="project" value="AgBase"/>
</dbReference>
<dbReference type="GO" id="GO:0005534">
    <property type="term" value="F:galactose binding"/>
    <property type="evidence" value="ECO:0000250"/>
    <property type="project" value="AgBase"/>
</dbReference>
<dbReference type="GO" id="GO:1903777">
    <property type="term" value="F:melibiose binding"/>
    <property type="evidence" value="ECO:0000250"/>
    <property type="project" value="AgBase"/>
</dbReference>
<dbReference type="GO" id="GO:0042803">
    <property type="term" value="F:protein homodimerization activity"/>
    <property type="evidence" value="ECO:0000250"/>
    <property type="project" value="AgBase"/>
</dbReference>
<dbReference type="GO" id="GO:0033296">
    <property type="term" value="F:rhamnose binding"/>
    <property type="evidence" value="ECO:0000250"/>
    <property type="project" value="AgBase"/>
</dbReference>
<dbReference type="CDD" id="cd22832">
    <property type="entry name" value="Gal_Rha_Lectin_CSL3_rpt1_rpt2-like"/>
    <property type="match status" value="2"/>
</dbReference>
<dbReference type="FunFam" id="2.60.120.740:FF:000003">
    <property type="entry name" value="Protein eva-1 homolog C"/>
    <property type="match status" value="2"/>
</dbReference>
<dbReference type="Gene3D" id="2.60.120.740">
    <property type="match status" value="2"/>
</dbReference>
<dbReference type="InterPro" id="IPR000922">
    <property type="entry name" value="Lectin_gal-bd_dom"/>
</dbReference>
<dbReference type="InterPro" id="IPR043159">
    <property type="entry name" value="Lectin_gal-bd_sf"/>
</dbReference>
<dbReference type="PANTHER" id="PTHR46780">
    <property type="entry name" value="PROTEIN EVA-1"/>
    <property type="match status" value="1"/>
</dbReference>
<dbReference type="Pfam" id="PF02140">
    <property type="entry name" value="SUEL_Lectin"/>
    <property type="match status" value="2"/>
</dbReference>
<dbReference type="PROSITE" id="PS50228">
    <property type="entry name" value="SUEL_LECTIN"/>
    <property type="match status" value="2"/>
</dbReference>
<accession>P86179</accession>
<organism>
    <name type="scientific">Oncorhynchus keta</name>
    <name type="common">Chum salmon</name>
    <name type="synonym">Salmo keta</name>
    <dbReference type="NCBI Taxonomy" id="8018"/>
    <lineage>
        <taxon>Eukaryota</taxon>
        <taxon>Metazoa</taxon>
        <taxon>Chordata</taxon>
        <taxon>Craniata</taxon>
        <taxon>Vertebrata</taxon>
        <taxon>Euteleostomi</taxon>
        <taxon>Actinopterygii</taxon>
        <taxon>Neopterygii</taxon>
        <taxon>Teleostei</taxon>
        <taxon>Protacanthopterygii</taxon>
        <taxon>Salmoniformes</taxon>
        <taxon>Salmonidae</taxon>
        <taxon>Salmoninae</taxon>
        <taxon>Oncorhynchus</taxon>
    </lineage>
</organism>
<comment type="function">
    <text evidence="2">L-rhamnose binding lectin. Has hemagglutinating activity towards rabbit erythrocytes, human type A erythrocytes, human type B erythrocytes, human type O erythrocytes and sheep erythrocytes. Hemagglutinating activity is inhibited by smooth-type lipopolysaccharide (LPS) from S.flexneri 1A, A.salmonicida and E.coli K12, but not by rough-type LPS from S.flexneri, E.coli K12 and E.coli EH100. Agglutinates E.coli K12 and B.subtilis.</text>
</comment>
<comment type="biophysicochemical properties">
    <temperatureDependence>
        <text evidence="2">Retains hemagglutinating activity after heating at 50 degrees Celsius for 120 minutes. Activity is abolished by heating at 80 degrees Celsius for 90 minutes.</text>
    </temperatureDependence>
</comment>
<evidence type="ECO:0000255" key="1">
    <source>
        <dbReference type="PROSITE-ProRule" id="PRU00260"/>
    </source>
</evidence>
<evidence type="ECO:0000269" key="2">
    <source ref="1"/>
</evidence>
<evidence type="ECO:0000303" key="3">
    <source ref="1"/>
</evidence>
<evidence type="ECO:0000305" key="4"/>
<evidence type="ECO:0007829" key="5">
    <source>
        <dbReference type="PDB" id="2ZX2"/>
    </source>
</evidence>
<evidence type="ECO:0007829" key="6">
    <source>
        <dbReference type="PDB" id="2ZX4"/>
    </source>
</evidence>
<reference evidence="4" key="1">
    <citation type="journal article" date="2002" name="Fish. Sci.">
        <title>Isolation and characterization of L-rhamnose-binding lectins from chum salmon (Oncorhynchus keta) eggs.</title>
        <authorList>
            <person name="Shiina N."/>
            <person name="Tateno H."/>
            <person name="Ogawa T."/>
            <person name="Muramoto K."/>
            <person name="Saneyoshi M."/>
            <person name="Kamiya H."/>
        </authorList>
    </citation>
    <scope>PROTEIN SEQUENCE</scope>
    <scope>FUNCTION</scope>
    <scope>BIOPHYSICOCHEMICAL PROPERTIES</scope>
    <source>
        <tissue evidence="2">Egg</tissue>
    </source>
</reference>
<keyword id="KW-0002">3D-structure</keyword>
<keyword id="KW-0903">Direct protein sequencing</keyword>
<keyword id="KW-0348">Hemagglutinin</keyword>
<keyword id="KW-0430">Lectin</keyword>
<keyword id="KW-0677">Repeat</keyword>
<name>CSL3_ONCKE</name>
<sequence length="195" mass="21476">AISITCEGSDALLQCDGAKIHIKRANYGRRQHDVCSIGRPDNQLTDTNCLSQSSTSKMAERCGGKSECIVPASNFVFGDPCVGTYKYLDTKYSCVQQQETISSIICEGSDSQLLCDRGEIRIQRANYGRRQHDVCSIGRPHQQLKNTNCLSQSTTSKMAERCDGKRQCIVSVSNSVFGDPCVGTYKYLDVAYTCD</sequence>
<proteinExistence type="evidence at protein level"/>
<protein>
    <recommendedName>
        <fullName evidence="3">L-rhamnose-binding lectin CSL3</fullName>
    </recommendedName>
</protein>
<feature type="chain" id="PRO_0000366204" description="L-rhamnose-binding lectin CSL3">
    <location>
        <begin position="1"/>
        <end position="195"/>
    </location>
</feature>
<feature type="domain" description="SUEL-type lectin 1" evidence="1">
    <location>
        <begin position="1"/>
        <end position="95"/>
    </location>
</feature>
<feature type="domain" description="SUEL-type lectin 2" evidence="1">
    <location>
        <begin position="105"/>
        <end position="195"/>
    </location>
</feature>
<feature type="strand" evidence="5">
    <location>
        <begin position="2"/>
        <end position="6"/>
    </location>
</feature>
<feature type="strand" evidence="5">
    <location>
        <begin position="9"/>
        <end position="14"/>
    </location>
</feature>
<feature type="strand" evidence="5">
    <location>
        <begin position="18"/>
        <end position="30"/>
    </location>
</feature>
<feature type="helix" evidence="5">
    <location>
        <begin position="41"/>
        <end position="43"/>
    </location>
</feature>
<feature type="helix" evidence="5">
    <location>
        <begin position="54"/>
        <end position="62"/>
    </location>
</feature>
<feature type="strand" evidence="5">
    <location>
        <begin position="66"/>
        <end position="71"/>
    </location>
</feature>
<feature type="helix" evidence="5">
    <location>
        <begin position="74"/>
        <end position="77"/>
    </location>
</feature>
<feature type="strand" evidence="5">
    <location>
        <begin position="87"/>
        <end position="95"/>
    </location>
</feature>
<feature type="strand" evidence="5">
    <location>
        <begin position="101"/>
        <end position="106"/>
    </location>
</feature>
<feature type="strand" evidence="5">
    <location>
        <begin position="109"/>
        <end position="114"/>
    </location>
</feature>
<feature type="strand" evidence="5">
    <location>
        <begin position="116"/>
        <end position="130"/>
    </location>
</feature>
<feature type="strand" evidence="6">
    <location>
        <begin position="132"/>
        <end position="135"/>
    </location>
</feature>
<feature type="helix" evidence="5">
    <location>
        <begin position="141"/>
        <end position="143"/>
    </location>
</feature>
<feature type="helix" evidence="5">
    <location>
        <begin position="154"/>
        <end position="162"/>
    </location>
</feature>
<feature type="strand" evidence="5">
    <location>
        <begin position="166"/>
        <end position="171"/>
    </location>
</feature>
<feature type="helix" evidence="5">
    <location>
        <begin position="174"/>
        <end position="177"/>
    </location>
</feature>
<feature type="strand" evidence="5">
    <location>
        <begin position="187"/>
        <end position="195"/>
    </location>
</feature>